<protein>
    <recommendedName>
        <fullName>Stabilizer of axonemal microtubules 2</fullName>
    </recommendedName>
</protein>
<gene>
    <name type="primary">SAXO2</name>
    <name type="synonym">FAM154B</name>
</gene>
<comment type="interaction">
    <interactant intactId="EBI-18394432">
        <id>Q658L1</id>
    </interactant>
    <interactant intactId="EBI-2510157">
        <id>Q96EF6</id>
        <label>FBXO17</label>
    </interactant>
    <organismsDiffer>false</organismsDiffer>
    <experiments>3</experiments>
</comment>
<comment type="interaction">
    <interactant intactId="EBI-18394432">
        <id>Q658L1</id>
    </interactant>
    <interactant intactId="EBI-701903">
        <id>Q14192</id>
        <label>FHL2</label>
    </interactant>
    <organismsDiffer>false</organismsDiffer>
    <experiments>3</experiments>
</comment>
<comment type="alternative products">
    <event type="alternative splicing"/>
    <isoform>
        <id>Q658L1-1</id>
        <name>1</name>
        <sequence type="displayed"/>
    </isoform>
    <isoform>
        <id>Q658L1-2</id>
        <name>2</name>
        <sequence type="described" ref="VSP_055086"/>
    </isoform>
</comment>
<comment type="similarity">
    <text evidence="2">Belongs to the FAM154 family.</text>
</comment>
<comment type="caution">
    <text evidence="2">It is uncertain whether Met-1 or Met-6 is the initiator.</text>
</comment>
<reference key="1">
    <citation type="journal article" date="2004" name="Nat. Genet.">
        <title>Complete sequencing and characterization of 21,243 full-length human cDNAs.</title>
        <authorList>
            <person name="Ota T."/>
            <person name="Suzuki Y."/>
            <person name="Nishikawa T."/>
            <person name="Otsuki T."/>
            <person name="Sugiyama T."/>
            <person name="Irie R."/>
            <person name="Wakamatsu A."/>
            <person name="Hayashi K."/>
            <person name="Sato H."/>
            <person name="Nagai K."/>
            <person name="Kimura K."/>
            <person name="Makita H."/>
            <person name="Sekine M."/>
            <person name="Obayashi M."/>
            <person name="Nishi T."/>
            <person name="Shibahara T."/>
            <person name="Tanaka T."/>
            <person name="Ishii S."/>
            <person name="Yamamoto J."/>
            <person name="Saito K."/>
            <person name="Kawai Y."/>
            <person name="Isono Y."/>
            <person name="Nakamura Y."/>
            <person name="Nagahari K."/>
            <person name="Murakami K."/>
            <person name="Yasuda T."/>
            <person name="Iwayanagi T."/>
            <person name="Wagatsuma M."/>
            <person name="Shiratori A."/>
            <person name="Sudo H."/>
            <person name="Hosoiri T."/>
            <person name="Kaku Y."/>
            <person name="Kodaira H."/>
            <person name="Kondo H."/>
            <person name="Sugawara M."/>
            <person name="Takahashi M."/>
            <person name="Kanda K."/>
            <person name="Yokoi T."/>
            <person name="Furuya T."/>
            <person name="Kikkawa E."/>
            <person name="Omura Y."/>
            <person name="Abe K."/>
            <person name="Kamihara K."/>
            <person name="Katsuta N."/>
            <person name="Sato K."/>
            <person name="Tanikawa M."/>
            <person name="Yamazaki M."/>
            <person name="Ninomiya K."/>
            <person name="Ishibashi T."/>
            <person name="Yamashita H."/>
            <person name="Murakawa K."/>
            <person name="Fujimori K."/>
            <person name="Tanai H."/>
            <person name="Kimata M."/>
            <person name="Watanabe M."/>
            <person name="Hiraoka S."/>
            <person name="Chiba Y."/>
            <person name="Ishida S."/>
            <person name="Ono Y."/>
            <person name="Takiguchi S."/>
            <person name="Watanabe S."/>
            <person name="Yosida M."/>
            <person name="Hotuta T."/>
            <person name="Kusano J."/>
            <person name="Kanehori K."/>
            <person name="Takahashi-Fujii A."/>
            <person name="Hara H."/>
            <person name="Tanase T.-O."/>
            <person name="Nomura Y."/>
            <person name="Togiya S."/>
            <person name="Komai F."/>
            <person name="Hara R."/>
            <person name="Takeuchi K."/>
            <person name="Arita M."/>
            <person name="Imose N."/>
            <person name="Musashino K."/>
            <person name="Yuuki H."/>
            <person name="Oshima A."/>
            <person name="Sasaki N."/>
            <person name="Aotsuka S."/>
            <person name="Yoshikawa Y."/>
            <person name="Matsunawa H."/>
            <person name="Ichihara T."/>
            <person name="Shiohata N."/>
            <person name="Sano S."/>
            <person name="Moriya S."/>
            <person name="Momiyama H."/>
            <person name="Satoh N."/>
            <person name="Takami S."/>
            <person name="Terashima Y."/>
            <person name="Suzuki O."/>
            <person name="Nakagawa S."/>
            <person name="Senoh A."/>
            <person name="Mizoguchi H."/>
            <person name="Goto Y."/>
            <person name="Shimizu F."/>
            <person name="Wakebe H."/>
            <person name="Hishigaki H."/>
            <person name="Watanabe T."/>
            <person name="Sugiyama A."/>
            <person name="Takemoto M."/>
            <person name="Kawakami B."/>
            <person name="Yamazaki M."/>
            <person name="Watanabe K."/>
            <person name="Kumagai A."/>
            <person name="Itakura S."/>
            <person name="Fukuzumi Y."/>
            <person name="Fujimori Y."/>
            <person name="Komiyama M."/>
            <person name="Tashiro H."/>
            <person name="Tanigami A."/>
            <person name="Fujiwara T."/>
            <person name="Ono T."/>
            <person name="Yamada K."/>
            <person name="Fujii Y."/>
            <person name="Ozaki K."/>
            <person name="Hirao M."/>
            <person name="Ohmori Y."/>
            <person name="Kawabata A."/>
            <person name="Hikiji T."/>
            <person name="Kobatake N."/>
            <person name="Inagaki H."/>
            <person name="Ikema Y."/>
            <person name="Okamoto S."/>
            <person name="Okitani R."/>
            <person name="Kawakami T."/>
            <person name="Noguchi S."/>
            <person name="Itoh T."/>
            <person name="Shigeta K."/>
            <person name="Senba T."/>
            <person name="Matsumura K."/>
            <person name="Nakajima Y."/>
            <person name="Mizuno T."/>
            <person name="Morinaga M."/>
            <person name="Sasaki M."/>
            <person name="Togashi T."/>
            <person name="Oyama M."/>
            <person name="Hata H."/>
            <person name="Watanabe M."/>
            <person name="Komatsu T."/>
            <person name="Mizushima-Sugano J."/>
            <person name="Satoh T."/>
            <person name="Shirai Y."/>
            <person name="Takahashi Y."/>
            <person name="Nakagawa K."/>
            <person name="Okumura K."/>
            <person name="Nagase T."/>
            <person name="Nomura N."/>
            <person name="Kikuchi H."/>
            <person name="Masuho Y."/>
            <person name="Yamashita R."/>
            <person name="Nakai K."/>
            <person name="Yada T."/>
            <person name="Nakamura Y."/>
            <person name="Ohara O."/>
            <person name="Isogai T."/>
            <person name="Sugano S."/>
        </authorList>
    </citation>
    <scope>NUCLEOTIDE SEQUENCE [LARGE SCALE MRNA] (ISOFORM 2)</scope>
    <source>
        <tissue>Trachea</tissue>
    </source>
</reference>
<reference key="2">
    <citation type="journal article" date="2007" name="BMC Genomics">
        <title>The full-ORF clone resource of the German cDNA consortium.</title>
        <authorList>
            <person name="Bechtel S."/>
            <person name="Rosenfelder H."/>
            <person name="Duda A."/>
            <person name="Schmidt C.P."/>
            <person name="Ernst U."/>
            <person name="Wellenreuther R."/>
            <person name="Mehrle A."/>
            <person name="Schuster C."/>
            <person name="Bahr A."/>
            <person name="Bloecker H."/>
            <person name="Heubner D."/>
            <person name="Hoerlein A."/>
            <person name="Michel G."/>
            <person name="Wedler H."/>
            <person name="Koehrer K."/>
            <person name="Ottenwaelder B."/>
            <person name="Poustka A."/>
            <person name="Wiemann S."/>
            <person name="Schupp I."/>
        </authorList>
    </citation>
    <scope>NUCLEOTIDE SEQUENCE [LARGE SCALE MRNA] (ISOFORM 1)</scope>
    <source>
        <tissue>Stomach</tissue>
    </source>
</reference>
<reference key="3">
    <citation type="journal article" date="2006" name="Nature">
        <title>Analysis of the DNA sequence and duplication history of human chromosome 15.</title>
        <authorList>
            <person name="Zody M.C."/>
            <person name="Garber M."/>
            <person name="Sharpe T."/>
            <person name="Young S.K."/>
            <person name="Rowen L."/>
            <person name="O'Neill K."/>
            <person name="Whittaker C.A."/>
            <person name="Kamal M."/>
            <person name="Chang J.L."/>
            <person name="Cuomo C.A."/>
            <person name="Dewar K."/>
            <person name="FitzGerald M.G."/>
            <person name="Kodira C.D."/>
            <person name="Madan A."/>
            <person name="Qin S."/>
            <person name="Yang X."/>
            <person name="Abbasi N."/>
            <person name="Abouelleil A."/>
            <person name="Arachchi H.M."/>
            <person name="Baradarani L."/>
            <person name="Birditt B."/>
            <person name="Bloom S."/>
            <person name="Bloom T."/>
            <person name="Borowsky M.L."/>
            <person name="Burke J."/>
            <person name="Butler J."/>
            <person name="Cook A."/>
            <person name="DeArellano K."/>
            <person name="DeCaprio D."/>
            <person name="Dorris L. III"/>
            <person name="Dors M."/>
            <person name="Eichler E.E."/>
            <person name="Engels R."/>
            <person name="Fahey J."/>
            <person name="Fleetwood P."/>
            <person name="Friedman C."/>
            <person name="Gearin G."/>
            <person name="Hall J.L."/>
            <person name="Hensley G."/>
            <person name="Johnson E."/>
            <person name="Jones C."/>
            <person name="Kamat A."/>
            <person name="Kaur A."/>
            <person name="Locke D.P."/>
            <person name="Madan A."/>
            <person name="Munson G."/>
            <person name="Jaffe D.B."/>
            <person name="Lui A."/>
            <person name="Macdonald P."/>
            <person name="Mauceli E."/>
            <person name="Naylor J.W."/>
            <person name="Nesbitt R."/>
            <person name="Nicol R."/>
            <person name="O'Leary S.B."/>
            <person name="Ratcliffe A."/>
            <person name="Rounsley S."/>
            <person name="She X."/>
            <person name="Sneddon K.M.B."/>
            <person name="Stewart S."/>
            <person name="Sougnez C."/>
            <person name="Stone S.M."/>
            <person name="Topham K."/>
            <person name="Vincent D."/>
            <person name="Wang S."/>
            <person name="Zimmer A.R."/>
            <person name="Birren B.W."/>
            <person name="Hood L."/>
            <person name="Lander E.S."/>
            <person name="Nusbaum C."/>
        </authorList>
    </citation>
    <scope>NUCLEOTIDE SEQUENCE [LARGE SCALE GENOMIC DNA]</scope>
</reference>
<reference key="4">
    <citation type="journal article" date="2024" name="Nat. Commun.">
        <title>Uncovering structural themes across cilia microtubule inner proteins with implications for human cilia function.</title>
        <authorList>
            <person name="Andersen J.S."/>
            <person name="Vijayakumaran A."/>
            <person name="Godbehere C."/>
            <person name="Lorentzen E."/>
            <person name="Mennella V."/>
            <person name="Schou K.B."/>
        </authorList>
    </citation>
    <scope>IDENTIFICATION OF MN REGIONS</scope>
</reference>
<organism>
    <name type="scientific">Homo sapiens</name>
    <name type="common">Human</name>
    <dbReference type="NCBI Taxonomy" id="9606"/>
    <lineage>
        <taxon>Eukaryota</taxon>
        <taxon>Metazoa</taxon>
        <taxon>Chordata</taxon>
        <taxon>Craniata</taxon>
        <taxon>Vertebrata</taxon>
        <taxon>Euteleostomi</taxon>
        <taxon>Mammalia</taxon>
        <taxon>Eutheria</taxon>
        <taxon>Euarchontoglires</taxon>
        <taxon>Primates</taxon>
        <taxon>Haplorrhini</taxon>
        <taxon>Catarrhini</taxon>
        <taxon>Hominidae</taxon>
        <taxon>Homo</taxon>
    </lineage>
</organism>
<keyword id="KW-0025">Alternative splicing</keyword>
<keyword id="KW-1267">Proteomics identification</keyword>
<keyword id="KW-1185">Reference proteome</keyword>
<dbReference type="EMBL" id="AK304339">
    <property type="protein sequence ID" value="BAG65184.1"/>
    <property type="molecule type" value="mRNA"/>
</dbReference>
<dbReference type="EMBL" id="AL833762">
    <property type="protein sequence ID" value="CAH56241.1"/>
    <property type="molecule type" value="mRNA"/>
</dbReference>
<dbReference type="EMBL" id="AC026624">
    <property type="status" value="NOT_ANNOTATED_CDS"/>
    <property type="molecule type" value="Genomic_DNA"/>
</dbReference>
<dbReference type="CCDS" id="CCDS32310.1">
    <molecule id="Q658L1-1"/>
</dbReference>
<dbReference type="RefSeq" id="NP_001008227.1">
    <molecule id="Q658L1-1"/>
    <property type="nucleotide sequence ID" value="NM_001008226.2"/>
</dbReference>
<dbReference type="RefSeq" id="NP_001335631.1">
    <molecule id="Q658L1-2"/>
    <property type="nucleotide sequence ID" value="NM_001348702.2"/>
</dbReference>
<dbReference type="RefSeq" id="NP_001335632.1">
    <molecule id="Q658L1-2"/>
    <property type="nucleotide sequence ID" value="NM_001348703.2"/>
</dbReference>
<dbReference type="BioGRID" id="129656">
    <property type="interactions" value="2"/>
</dbReference>
<dbReference type="FunCoup" id="Q658L1">
    <property type="interactions" value="82"/>
</dbReference>
<dbReference type="IntAct" id="Q658L1">
    <property type="interactions" value="2"/>
</dbReference>
<dbReference type="STRING" id="9606.ENSP00000340445"/>
<dbReference type="GlyGen" id="Q658L1">
    <property type="glycosylation" value="2 sites, 1 O-linked glycan (2 sites)"/>
</dbReference>
<dbReference type="iPTMnet" id="Q658L1"/>
<dbReference type="PhosphoSitePlus" id="Q658L1"/>
<dbReference type="BioMuta" id="SAXO2"/>
<dbReference type="DMDM" id="74708419"/>
<dbReference type="MassIVE" id="Q658L1"/>
<dbReference type="PaxDb" id="9606-ENSP00000340445"/>
<dbReference type="PeptideAtlas" id="Q658L1"/>
<dbReference type="ProteomicsDB" id="5831"/>
<dbReference type="ProteomicsDB" id="65922">
    <molecule id="Q658L1-1"/>
</dbReference>
<dbReference type="Antibodypedia" id="52475">
    <property type="antibodies" value="28 antibodies from 11 providers"/>
</dbReference>
<dbReference type="DNASU" id="283726"/>
<dbReference type="Ensembl" id="ENST00000339465.5">
    <molecule id="Q658L1-1"/>
    <property type="protein sequence ID" value="ENSP00000340445.5"/>
    <property type="gene ID" value="ENSG00000188659.10"/>
</dbReference>
<dbReference type="GeneID" id="283726"/>
<dbReference type="KEGG" id="hsa:283726"/>
<dbReference type="UCSC" id="uc002bgv.4">
    <molecule id="Q658L1-1"/>
    <property type="organism name" value="human"/>
</dbReference>
<dbReference type="AGR" id="HGNC:33727"/>
<dbReference type="CTD" id="283726"/>
<dbReference type="DisGeNET" id="283726"/>
<dbReference type="GeneCards" id="SAXO2"/>
<dbReference type="HGNC" id="HGNC:33727">
    <property type="gene designation" value="SAXO2"/>
</dbReference>
<dbReference type="HPA" id="ENSG00000188659">
    <property type="expression patterns" value="Group enriched (epididymis, fallopian tube, testis)"/>
</dbReference>
<dbReference type="neXtProt" id="NX_Q658L1"/>
<dbReference type="OpenTargets" id="ENSG00000188659"/>
<dbReference type="PharmGKB" id="PA162386665"/>
<dbReference type="VEuPathDB" id="HostDB:ENSG00000188659"/>
<dbReference type="eggNOG" id="ENOG502QWHB">
    <property type="taxonomic scope" value="Eukaryota"/>
</dbReference>
<dbReference type="GeneTree" id="ENSGT00390000007252"/>
<dbReference type="HOGENOM" id="CLU_047658_0_0_1"/>
<dbReference type="InParanoid" id="Q658L1"/>
<dbReference type="OMA" id="HVDICPA"/>
<dbReference type="OrthoDB" id="365640at2759"/>
<dbReference type="PAN-GO" id="Q658L1">
    <property type="GO annotations" value="6 GO annotations based on evolutionary models"/>
</dbReference>
<dbReference type="PhylomeDB" id="Q658L1"/>
<dbReference type="TreeFam" id="TF319394"/>
<dbReference type="PathwayCommons" id="Q658L1"/>
<dbReference type="SignaLink" id="Q658L1"/>
<dbReference type="BioGRID-ORCS" id="283726">
    <property type="hits" value="10 hits in 1117 CRISPR screens"/>
</dbReference>
<dbReference type="GenomeRNAi" id="283726"/>
<dbReference type="Pharos" id="Q658L1">
    <property type="development level" value="Tdark"/>
</dbReference>
<dbReference type="PRO" id="PR:Q658L1"/>
<dbReference type="Proteomes" id="UP000005640">
    <property type="component" value="Chromosome 15"/>
</dbReference>
<dbReference type="RNAct" id="Q658L1">
    <property type="molecule type" value="protein"/>
</dbReference>
<dbReference type="Bgee" id="ENSG00000188659">
    <property type="expression patterns" value="Expressed in right uterine tube and 108 other cell types or tissues"/>
</dbReference>
<dbReference type="ExpressionAtlas" id="Q658L1">
    <property type="expression patterns" value="baseline and differential"/>
</dbReference>
<dbReference type="GO" id="GO:0005879">
    <property type="term" value="C:axonemal microtubule"/>
    <property type="evidence" value="ECO:0000318"/>
    <property type="project" value="GO_Central"/>
</dbReference>
<dbReference type="GO" id="GO:0005814">
    <property type="term" value="C:centriole"/>
    <property type="evidence" value="ECO:0000318"/>
    <property type="project" value="GO_Central"/>
</dbReference>
<dbReference type="GO" id="GO:0036064">
    <property type="term" value="C:ciliary basal body"/>
    <property type="evidence" value="ECO:0000318"/>
    <property type="project" value="GO_Central"/>
</dbReference>
<dbReference type="GO" id="GO:0005856">
    <property type="term" value="C:cytoskeleton"/>
    <property type="evidence" value="ECO:0000318"/>
    <property type="project" value="GO_Central"/>
</dbReference>
<dbReference type="GO" id="GO:0036126">
    <property type="term" value="C:sperm flagellum"/>
    <property type="evidence" value="ECO:0000318"/>
    <property type="project" value="GO_Central"/>
</dbReference>
<dbReference type="GO" id="GO:0008017">
    <property type="term" value="F:microtubule binding"/>
    <property type="evidence" value="ECO:0000318"/>
    <property type="project" value="GO_Central"/>
</dbReference>
<dbReference type="InterPro" id="IPR033336">
    <property type="entry name" value="SAXO1/2"/>
</dbReference>
<dbReference type="PANTHER" id="PTHR31516">
    <property type="entry name" value="STABILIZER OF AXONEMAL MICROTUBULES 2"/>
    <property type="match status" value="1"/>
</dbReference>
<dbReference type="PANTHER" id="PTHR31516:SF6">
    <property type="entry name" value="STABILIZER OF AXONEMAL MICROTUBULES 2"/>
    <property type="match status" value="1"/>
</dbReference>
<dbReference type="Pfam" id="PF05217">
    <property type="entry name" value="SAXO1-2"/>
    <property type="match status" value="1"/>
</dbReference>
<proteinExistence type="evidence at protein level"/>
<feature type="chain" id="PRO_0000321839" description="Stabilizer of axonemal microtubules 2">
    <location>
        <begin position="1"/>
        <end position="398"/>
    </location>
</feature>
<feature type="region of interest" description="Mn 1" evidence="3">
    <location>
        <begin position="114"/>
        <end position="126"/>
    </location>
</feature>
<feature type="region of interest" description="Mn 2" evidence="3">
    <location>
        <begin position="148"/>
        <end position="162"/>
    </location>
</feature>
<feature type="region of interest" description="Mn 3" evidence="3">
    <location>
        <begin position="248"/>
        <end position="260"/>
    </location>
</feature>
<feature type="region of interest" description="Mn 4" evidence="3">
    <location>
        <begin position="282"/>
        <end position="296"/>
    </location>
</feature>
<feature type="region of interest" description="Mn 5" evidence="3">
    <location>
        <begin position="316"/>
        <end position="328"/>
    </location>
</feature>
<feature type="region of interest" description="Mn 6" evidence="3">
    <location>
        <begin position="350"/>
        <end position="364"/>
    </location>
</feature>
<feature type="splice variant" id="VSP_055086" description="In isoform 2." evidence="1">
    <original>MGAKSMRSWCLCQICSCG</original>
    <variation>MPW</variation>
    <location>
        <begin position="1"/>
        <end position="18"/>
    </location>
</feature>
<feature type="sequence variant" id="VAR_039359" description="In dbSNP:rs11631813.">
    <original>S</original>
    <variation>G</variation>
    <location>
        <position position="8"/>
    </location>
</feature>
<feature type="sequence variant" id="VAR_039360" description="In dbSNP:rs16973457.">
    <original>P</original>
    <variation>L</variation>
    <location>
        <position position="34"/>
    </location>
</feature>
<feature type="sequence variant" id="VAR_039361" description="In dbSNP:rs11630197.">
    <original>W</original>
    <variation>R</variation>
    <location>
        <position position="225"/>
    </location>
</feature>
<name>SAXO2_HUMAN</name>
<evidence type="ECO:0000303" key="1">
    <source>
    </source>
</evidence>
<evidence type="ECO:0000305" key="2"/>
<evidence type="ECO:0000305" key="3">
    <source>
    </source>
</evidence>
<sequence length="398" mass="45933">MGAKSMRSWCLCQICSCGSDYCPYEIVKQPRHVPEEYKPKQGKIDLGTTYKRDLNSYKVQPVAIVRPLERQVKKGKLDTVPTYKDDYRAWDLHKSELYKPEQTYHPPTVKFGNSTTFQDDFVPQEIKPRQSFKPSSVVKRSTAPFNGITSHRLDYIPHQLELKFERPKEVYKPTDQRFEDLTTHRCDFQGLIGETAKLCRPVHTRVTQNALFEGSTEFRESFQPWEIPPPEVKKVPEYVPPTGSMLLNSTSHLDYVPYQANHVVPIRPVSQKRSNNFPFQGKSIMKEDFPAWESCRQGLIKKQQQIPNPSGKFDGLSTFRSHYVPHELIPTESCKPLNIAFKSSVPFDDVTMYSVEYTPKRQEICPASYPSPPGYIFDNTNSQGHKFFRKIIPAVKAF</sequence>
<accession>Q658L1</accession>
<accession>B4E2M2</accession>